<name>TRY2_CANLF</name>
<keyword id="KW-0106">Calcium</keyword>
<keyword id="KW-0222">Digestion</keyword>
<keyword id="KW-1015">Disulfide bond</keyword>
<keyword id="KW-0378">Hydrolase</keyword>
<keyword id="KW-0479">Metal-binding</keyword>
<keyword id="KW-0645">Protease</keyword>
<keyword id="KW-1185">Reference proteome</keyword>
<keyword id="KW-0964">Secreted</keyword>
<keyword id="KW-0720">Serine protease</keyword>
<keyword id="KW-0732">Signal</keyword>
<keyword id="KW-0865">Zymogen</keyword>
<protein>
    <recommendedName>
        <fullName>Anionic trypsin</fullName>
        <ecNumber>3.4.21.4</ecNumber>
    </recommendedName>
</protein>
<feature type="signal peptide">
    <location>
        <begin position="1"/>
        <end position="15"/>
    </location>
</feature>
<feature type="propeptide" id="PRO_0000028193" description="Activation peptide">
    <location>
        <begin position="16"/>
        <end position="23"/>
    </location>
</feature>
<feature type="chain" id="PRO_0000028194" description="Anionic trypsin">
    <location>
        <begin position="24"/>
        <end position="247"/>
    </location>
</feature>
<feature type="domain" description="Peptidase S1" evidence="2">
    <location>
        <begin position="24"/>
        <end position="244"/>
    </location>
</feature>
<feature type="active site" description="Charge relay system" evidence="1">
    <location>
        <position position="63"/>
    </location>
</feature>
<feature type="active site" description="Charge relay system" evidence="1">
    <location>
        <position position="107"/>
    </location>
</feature>
<feature type="active site" description="Charge relay system" evidence="1">
    <location>
        <position position="200"/>
    </location>
</feature>
<feature type="binding site" evidence="1">
    <location>
        <position position="75"/>
    </location>
    <ligand>
        <name>Ca(2+)</name>
        <dbReference type="ChEBI" id="CHEBI:29108"/>
    </ligand>
</feature>
<feature type="binding site" evidence="1">
    <location>
        <position position="77"/>
    </location>
    <ligand>
        <name>Ca(2+)</name>
        <dbReference type="ChEBI" id="CHEBI:29108"/>
    </ligand>
</feature>
<feature type="binding site" evidence="1">
    <location>
        <position position="80"/>
    </location>
    <ligand>
        <name>Ca(2+)</name>
        <dbReference type="ChEBI" id="CHEBI:29108"/>
    </ligand>
</feature>
<feature type="binding site" evidence="1">
    <location>
        <position position="85"/>
    </location>
    <ligand>
        <name>Ca(2+)</name>
        <dbReference type="ChEBI" id="CHEBI:29108"/>
    </ligand>
</feature>
<feature type="site" description="Required for specificity" evidence="1">
    <location>
        <position position="194"/>
    </location>
</feature>
<feature type="disulfide bond" evidence="2">
    <location>
        <begin position="30"/>
        <end position="160"/>
    </location>
</feature>
<feature type="disulfide bond" evidence="2">
    <location>
        <begin position="48"/>
        <end position="64"/>
    </location>
</feature>
<feature type="disulfide bond" evidence="2">
    <location>
        <begin position="132"/>
        <end position="233"/>
    </location>
</feature>
<feature type="disulfide bond" evidence="2">
    <location>
        <begin position="139"/>
        <end position="206"/>
    </location>
</feature>
<feature type="disulfide bond" evidence="2">
    <location>
        <begin position="171"/>
        <end position="185"/>
    </location>
</feature>
<feature type="disulfide bond" evidence="2">
    <location>
        <begin position="196"/>
        <end position="220"/>
    </location>
</feature>
<proteinExistence type="evidence at transcript level"/>
<comment type="catalytic activity">
    <reaction>
        <text>Preferential cleavage: Arg-|-Xaa, Lys-|-Xaa.</text>
        <dbReference type="EC" id="3.4.21.4"/>
    </reaction>
</comment>
<comment type="cofactor">
    <cofactor evidence="1">
        <name>Ca(2+)</name>
        <dbReference type="ChEBI" id="CHEBI:29108"/>
    </cofactor>
    <text evidence="1">Binds 1 Ca(2+) ion per subunit.</text>
</comment>
<comment type="subcellular location">
    <subcellularLocation>
        <location>Secreted</location>
        <location>Extracellular space</location>
    </subcellularLocation>
</comment>
<comment type="similarity">
    <text evidence="2">Belongs to the peptidase S1 family.</text>
</comment>
<accession>P06872</accession>
<organism>
    <name type="scientific">Canis lupus familiaris</name>
    <name type="common">Dog</name>
    <name type="synonym">Canis familiaris</name>
    <dbReference type="NCBI Taxonomy" id="9615"/>
    <lineage>
        <taxon>Eukaryota</taxon>
        <taxon>Metazoa</taxon>
        <taxon>Chordata</taxon>
        <taxon>Craniata</taxon>
        <taxon>Vertebrata</taxon>
        <taxon>Euteleostomi</taxon>
        <taxon>Mammalia</taxon>
        <taxon>Eutheria</taxon>
        <taxon>Laurasiatheria</taxon>
        <taxon>Carnivora</taxon>
        <taxon>Caniformia</taxon>
        <taxon>Canidae</taxon>
        <taxon>Canis</taxon>
    </lineage>
</organism>
<evidence type="ECO:0000250" key="1"/>
<evidence type="ECO:0000255" key="2">
    <source>
        <dbReference type="PROSITE-ProRule" id="PRU00274"/>
    </source>
</evidence>
<dbReference type="EC" id="3.4.21.4"/>
<dbReference type="EMBL" id="M11589">
    <property type="protein sequence ID" value="AAA30899.1"/>
    <property type="molecule type" value="mRNA"/>
</dbReference>
<dbReference type="PIR" id="A26273">
    <property type="entry name" value="TRDG"/>
</dbReference>
<dbReference type="RefSeq" id="XP_003432104.1">
    <property type="nucleotide sequence ID" value="XM_003432056.4"/>
</dbReference>
<dbReference type="RefSeq" id="XP_038415282.1">
    <property type="nucleotide sequence ID" value="XM_038559354.1"/>
</dbReference>
<dbReference type="RefSeq" id="XP_038544981.1">
    <property type="nucleotide sequence ID" value="XM_038689053.1"/>
</dbReference>
<dbReference type="SMR" id="P06872"/>
<dbReference type="FunCoup" id="P06872">
    <property type="interactions" value="62"/>
</dbReference>
<dbReference type="STRING" id="9615.ENSCAFP00000043963"/>
<dbReference type="MEROPS" id="S01.120"/>
<dbReference type="PaxDb" id="9612-ENSCAFP00000021363"/>
<dbReference type="GeneID" id="100686744"/>
<dbReference type="KEGG" id="cfa:100686744"/>
<dbReference type="CTD" id="5645"/>
<dbReference type="eggNOG" id="KOG3627">
    <property type="taxonomic scope" value="Eukaryota"/>
</dbReference>
<dbReference type="HOGENOM" id="CLU_006842_7_0_1"/>
<dbReference type="InParanoid" id="P06872"/>
<dbReference type="OMA" id="HPRYSSW"/>
<dbReference type="OrthoDB" id="10059102at2759"/>
<dbReference type="TreeFam" id="TF331065"/>
<dbReference type="Proteomes" id="UP000002254">
    <property type="component" value="Unplaced"/>
</dbReference>
<dbReference type="Proteomes" id="UP000694429">
    <property type="component" value="Unplaced"/>
</dbReference>
<dbReference type="Proteomes" id="UP000694542">
    <property type="component" value="Unplaced"/>
</dbReference>
<dbReference type="Proteomes" id="UP000805418">
    <property type="component" value="Unplaced"/>
</dbReference>
<dbReference type="GO" id="GO:0005576">
    <property type="term" value="C:extracellular region"/>
    <property type="evidence" value="ECO:0000250"/>
    <property type="project" value="UniProtKB"/>
</dbReference>
<dbReference type="GO" id="GO:0005615">
    <property type="term" value="C:extracellular space"/>
    <property type="evidence" value="ECO:0000250"/>
    <property type="project" value="UniProtKB"/>
</dbReference>
<dbReference type="GO" id="GO:0005509">
    <property type="term" value="F:calcium ion binding"/>
    <property type="evidence" value="ECO:0000250"/>
    <property type="project" value="UniProtKB"/>
</dbReference>
<dbReference type="GO" id="GO:0004252">
    <property type="term" value="F:serine-type endopeptidase activity"/>
    <property type="evidence" value="ECO:0000250"/>
    <property type="project" value="UniProtKB"/>
</dbReference>
<dbReference type="GO" id="GO:0030574">
    <property type="term" value="P:collagen catabolic process"/>
    <property type="evidence" value="ECO:0000250"/>
    <property type="project" value="UniProtKB"/>
</dbReference>
<dbReference type="GO" id="GO:0007586">
    <property type="term" value="P:digestion"/>
    <property type="evidence" value="ECO:0007669"/>
    <property type="project" value="UniProtKB-KW"/>
</dbReference>
<dbReference type="GO" id="GO:0006508">
    <property type="term" value="P:proteolysis"/>
    <property type="evidence" value="ECO:0000250"/>
    <property type="project" value="UniProtKB"/>
</dbReference>
<dbReference type="CDD" id="cd00190">
    <property type="entry name" value="Tryp_SPc"/>
    <property type="match status" value="1"/>
</dbReference>
<dbReference type="FunFam" id="2.40.10.10:FF:000019">
    <property type="entry name" value="Anionic trypsin"/>
    <property type="match status" value="1"/>
</dbReference>
<dbReference type="Gene3D" id="2.40.10.10">
    <property type="entry name" value="Trypsin-like serine proteases"/>
    <property type="match status" value="2"/>
</dbReference>
<dbReference type="InterPro" id="IPR009003">
    <property type="entry name" value="Peptidase_S1_PA"/>
</dbReference>
<dbReference type="InterPro" id="IPR043504">
    <property type="entry name" value="Peptidase_S1_PA_chymotrypsin"/>
</dbReference>
<dbReference type="InterPro" id="IPR001314">
    <property type="entry name" value="Peptidase_S1A"/>
</dbReference>
<dbReference type="InterPro" id="IPR050127">
    <property type="entry name" value="Serine_Proteases_S1"/>
</dbReference>
<dbReference type="InterPro" id="IPR001254">
    <property type="entry name" value="Trypsin_dom"/>
</dbReference>
<dbReference type="InterPro" id="IPR018114">
    <property type="entry name" value="TRYPSIN_HIS"/>
</dbReference>
<dbReference type="InterPro" id="IPR033116">
    <property type="entry name" value="TRYPSIN_SER"/>
</dbReference>
<dbReference type="PANTHER" id="PTHR24264:SF57">
    <property type="entry name" value="TRYPSIN-2"/>
    <property type="match status" value="1"/>
</dbReference>
<dbReference type="PANTHER" id="PTHR24264">
    <property type="entry name" value="TRYPSIN-RELATED"/>
    <property type="match status" value="1"/>
</dbReference>
<dbReference type="Pfam" id="PF00089">
    <property type="entry name" value="Trypsin"/>
    <property type="match status" value="1"/>
</dbReference>
<dbReference type="PRINTS" id="PR00722">
    <property type="entry name" value="CHYMOTRYPSIN"/>
</dbReference>
<dbReference type="SMART" id="SM00020">
    <property type="entry name" value="Tryp_SPc"/>
    <property type="match status" value="1"/>
</dbReference>
<dbReference type="SUPFAM" id="SSF50494">
    <property type="entry name" value="Trypsin-like serine proteases"/>
    <property type="match status" value="1"/>
</dbReference>
<dbReference type="PROSITE" id="PS50240">
    <property type="entry name" value="TRYPSIN_DOM"/>
    <property type="match status" value="1"/>
</dbReference>
<dbReference type="PROSITE" id="PS00134">
    <property type="entry name" value="TRYPSIN_HIS"/>
    <property type="match status" value="1"/>
</dbReference>
<dbReference type="PROSITE" id="PS00135">
    <property type="entry name" value="TRYPSIN_SER"/>
    <property type="match status" value="1"/>
</dbReference>
<sequence length="247" mass="26423">MNPLLILAFLGAAVATPTDDDDKIVGGYTCEENSVPYQVSLNAGYHFCGGSLISDQWVVSAAHCYKSRIQVRLGEYNIDVLEGNEQFINSAKVIRHPNYNSWILDNDIMLIKLSSPAVLNARVATISLPRACAAPGTQCLISGWGNTLSSGTNYPELLQCLDAPILTQAQCEASYPGQITENMICAGFLEGGKDSCQGDSGGPVVCNGELQGIVSWGYGCAQKNKPGVYTKVCNFVDWIQSTIAANS</sequence>
<reference key="1">
    <citation type="journal article" date="1985" name="Mol. Cell. Biol.">
        <title>Differential regulation of trypsinogen mRNA translation: full-length mRNA sequences encoding two oppositely charged trypsinogen isoenzymes in the dog pancreas.</title>
        <authorList>
            <person name="Pinsky S.D."/>
            <person name="Laforge K.S."/>
            <person name="Scheele G."/>
        </authorList>
    </citation>
    <scope>NUCLEOTIDE SEQUENCE [MRNA]</scope>
</reference>